<reference key="1">
    <citation type="journal article" date="2006" name="Proc. Natl. Acad. Sci. U.S.A.">
        <title>The complete genome sequence of Lactobacillus bulgaricus reveals extensive and ongoing reductive evolution.</title>
        <authorList>
            <person name="van de Guchte M."/>
            <person name="Penaud S."/>
            <person name="Grimaldi C."/>
            <person name="Barbe V."/>
            <person name="Bryson K."/>
            <person name="Nicolas P."/>
            <person name="Robert C."/>
            <person name="Oztas S."/>
            <person name="Mangenot S."/>
            <person name="Couloux A."/>
            <person name="Loux V."/>
            <person name="Dervyn R."/>
            <person name="Bossy R."/>
            <person name="Bolotin A."/>
            <person name="Batto J.-M."/>
            <person name="Walunas T."/>
            <person name="Gibrat J.-F."/>
            <person name="Bessieres P."/>
            <person name="Weissenbach J."/>
            <person name="Ehrlich S.D."/>
            <person name="Maguin E."/>
        </authorList>
    </citation>
    <scope>NUCLEOTIDE SEQUENCE [LARGE SCALE GENOMIC DNA]</scope>
    <source>
        <strain>ATCC 11842 / DSM 20081 / BCRC 10696 / JCM 1002 / NBRC 13953 / NCIMB 11778 / NCTC 12712 / WDCM 00102 / Lb 14</strain>
    </source>
</reference>
<name>SCPB_LACDA</name>
<comment type="function">
    <text evidence="1">Participates in chromosomal partition during cell division. May act via the formation of a condensin-like complex containing Smc and ScpA that pull DNA away from mid-cell into both cell halves.</text>
</comment>
<comment type="subunit">
    <text evidence="1">Homodimer. Homodimerization may be required to stabilize the binding of ScpA to the Smc head domains. Component of a cohesin-like complex composed of ScpA, ScpB and the Smc homodimer, in which ScpA and ScpB bind to the head domain of Smc. The presence of the three proteins is required for the association of the complex with DNA.</text>
</comment>
<comment type="subcellular location">
    <subcellularLocation>
        <location evidence="1">Cytoplasm</location>
    </subcellularLocation>
    <text evidence="1">Associated with two foci at the outer edges of the nucleoid region in young cells, and at four foci within both cell halves in older cells.</text>
</comment>
<comment type="similarity">
    <text evidence="1">Belongs to the ScpB family.</text>
</comment>
<accession>Q1GAK5</accession>
<dbReference type="EMBL" id="CR954253">
    <property type="protein sequence ID" value="CAI97668.1"/>
    <property type="molecule type" value="Genomic_DNA"/>
</dbReference>
<dbReference type="RefSeq" id="WP_003624281.1">
    <property type="nucleotide sequence ID" value="NZ_JQAV01000008.1"/>
</dbReference>
<dbReference type="SMR" id="Q1GAK5"/>
<dbReference type="STRING" id="390333.Ldb0846"/>
<dbReference type="KEGG" id="ldb:Ldb0846"/>
<dbReference type="eggNOG" id="COG1386">
    <property type="taxonomic scope" value="Bacteria"/>
</dbReference>
<dbReference type="HOGENOM" id="CLU_045647_5_3_9"/>
<dbReference type="BioCyc" id="LDEL390333:LDB_RS03710-MONOMER"/>
<dbReference type="Proteomes" id="UP000001259">
    <property type="component" value="Chromosome"/>
</dbReference>
<dbReference type="GO" id="GO:0005737">
    <property type="term" value="C:cytoplasm"/>
    <property type="evidence" value="ECO:0007669"/>
    <property type="project" value="UniProtKB-SubCell"/>
</dbReference>
<dbReference type="GO" id="GO:0051301">
    <property type="term" value="P:cell division"/>
    <property type="evidence" value="ECO:0007669"/>
    <property type="project" value="UniProtKB-KW"/>
</dbReference>
<dbReference type="GO" id="GO:0051304">
    <property type="term" value="P:chromosome separation"/>
    <property type="evidence" value="ECO:0007669"/>
    <property type="project" value="InterPro"/>
</dbReference>
<dbReference type="GO" id="GO:0006260">
    <property type="term" value="P:DNA replication"/>
    <property type="evidence" value="ECO:0007669"/>
    <property type="project" value="UniProtKB-UniRule"/>
</dbReference>
<dbReference type="Gene3D" id="1.10.10.10">
    <property type="entry name" value="Winged helix-like DNA-binding domain superfamily/Winged helix DNA-binding domain"/>
    <property type="match status" value="2"/>
</dbReference>
<dbReference type="HAMAP" id="MF_01804">
    <property type="entry name" value="ScpB"/>
    <property type="match status" value="1"/>
</dbReference>
<dbReference type="InterPro" id="IPR005234">
    <property type="entry name" value="ScpB_csome_segregation"/>
</dbReference>
<dbReference type="InterPro" id="IPR036388">
    <property type="entry name" value="WH-like_DNA-bd_sf"/>
</dbReference>
<dbReference type="InterPro" id="IPR036390">
    <property type="entry name" value="WH_DNA-bd_sf"/>
</dbReference>
<dbReference type="NCBIfam" id="TIGR00281">
    <property type="entry name" value="SMC-Scp complex subunit ScpB"/>
    <property type="match status" value="1"/>
</dbReference>
<dbReference type="PANTHER" id="PTHR34298">
    <property type="entry name" value="SEGREGATION AND CONDENSATION PROTEIN B"/>
    <property type="match status" value="1"/>
</dbReference>
<dbReference type="PANTHER" id="PTHR34298:SF2">
    <property type="entry name" value="SEGREGATION AND CONDENSATION PROTEIN B"/>
    <property type="match status" value="1"/>
</dbReference>
<dbReference type="Pfam" id="PF04079">
    <property type="entry name" value="SMC_ScpB"/>
    <property type="match status" value="1"/>
</dbReference>
<dbReference type="PIRSF" id="PIRSF019345">
    <property type="entry name" value="ScpB"/>
    <property type="match status" value="1"/>
</dbReference>
<dbReference type="SUPFAM" id="SSF46785">
    <property type="entry name" value="Winged helix' DNA-binding domain"/>
    <property type="match status" value="2"/>
</dbReference>
<evidence type="ECO:0000255" key="1">
    <source>
        <dbReference type="HAMAP-Rule" id="MF_01804"/>
    </source>
</evidence>
<proteinExistence type="inferred from homology"/>
<gene>
    <name evidence="1" type="primary">scpB</name>
    <name type="ordered locus">Ldb0846</name>
</gene>
<organism>
    <name type="scientific">Lactobacillus delbrueckii subsp. bulgaricus (strain ATCC 11842 / DSM 20081 / BCRC 10696 / JCM 1002 / NBRC 13953 / NCIMB 11778 / NCTC 12712 / WDCM 00102 / Lb 14)</name>
    <dbReference type="NCBI Taxonomy" id="390333"/>
    <lineage>
        <taxon>Bacteria</taxon>
        <taxon>Bacillati</taxon>
        <taxon>Bacillota</taxon>
        <taxon>Bacilli</taxon>
        <taxon>Lactobacillales</taxon>
        <taxon>Lactobacillaceae</taxon>
        <taxon>Lactobacillus</taxon>
    </lineage>
</organism>
<feature type="chain" id="PRO_0000273301" description="Segregation and condensation protein B">
    <location>
        <begin position="1"/>
        <end position="200"/>
    </location>
</feature>
<protein>
    <recommendedName>
        <fullName evidence="1">Segregation and condensation protein B</fullName>
    </recommendedName>
</protein>
<keyword id="KW-0131">Cell cycle</keyword>
<keyword id="KW-0132">Cell division</keyword>
<keyword id="KW-0159">Chromosome partition</keyword>
<keyword id="KW-0963">Cytoplasm</keyword>
<keyword id="KW-1185">Reference proteome</keyword>
<sequence length="200" mass="22221">MTSKIAQLQALLYVAGDGGIKKEQLRDLLQLADPEIESLAKRLQEKLASDLDCGLQLLEINDEYKLTTSGEVSDLVEAYFNKDLTKNISQSALEILAIVAYRQPITRIEIDEIRGVNSSGALQTLVWRGLVKAQGVKDAPGHPKLYVTTDYFLQYFGYKSLADLPVIENFEDSSFDADGQVDLFAENGTADEAFHKMEDL</sequence>